<dbReference type="EMBL" id="CU329671">
    <property type="protein sequence ID" value="CAB75400.1"/>
    <property type="molecule type" value="Genomic_DNA"/>
</dbReference>
<dbReference type="RefSeq" id="NP_596648.1">
    <property type="nucleotide sequence ID" value="NM_001022570.2"/>
</dbReference>
<dbReference type="STRING" id="284812.Q9P7Z8"/>
<dbReference type="PaxDb" id="4896-SPBC26H8.13c.1"/>
<dbReference type="EnsemblFungi" id="SPBC26H8.13c.1">
    <property type="protein sequence ID" value="SPBC26H8.13c.1:pep"/>
    <property type="gene ID" value="SPBC26H8.13c"/>
</dbReference>
<dbReference type="KEGG" id="spo:2540583"/>
<dbReference type="PomBase" id="SPBC26H8.13c"/>
<dbReference type="VEuPathDB" id="FungiDB:SPBC26H8.13c"/>
<dbReference type="HOGENOM" id="CLU_2005244_0_0_1"/>
<dbReference type="InParanoid" id="Q9P7Z8"/>
<dbReference type="OMA" id="CICLREC"/>
<dbReference type="PRO" id="PR:Q9P7Z8"/>
<dbReference type="Proteomes" id="UP000002485">
    <property type="component" value="Chromosome II"/>
</dbReference>
<dbReference type="GO" id="GO:0005829">
    <property type="term" value="C:cytosol"/>
    <property type="evidence" value="ECO:0007005"/>
    <property type="project" value="PomBase"/>
</dbReference>
<dbReference type="GO" id="GO:0005634">
    <property type="term" value="C:nucleus"/>
    <property type="evidence" value="ECO:0007005"/>
    <property type="project" value="PomBase"/>
</dbReference>
<dbReference type="InterPro" id="IPR022773">
    <property type="entry name" value="Siva"/>
</dbReference>
<dbReference type="Pfam" id="PF05458">
    <property type="entry name" value="Siva"/>
    <property type="match status" value="1"/>
</dbReference>
<sequence>MVIKRGFIGNTPKPSRCKRTKPIFREPNSPVNGGLVYNHPLHTAAAVKEAFSENRGFRTCHVCHRKNNMRLKVGTCESCKKHTCAICIRQCHKCESNVCSMCSKQERTFESEAFCPSCYPLDTY</sequence>
<feature type="chain" id="PRO_0000304046" description="Uncharacterized protein C26H8.13c">
    <location>
        <begin position="1"/>
        <end position="124"/>
    </location>
</feature>
<reference key="1">
    <citation type="journal article" date="2002" name="Nature">
        <title>The genome sequence of Schizosaccharomyces pombe.</title>
        <authorList>
            <person name="Wood V."/>
            <person name="Gwilliam R."/>
            <person name="Rajandream M.A."/>
            <person name="Lyne M.H."/>
            <person name="Lyne R."/>
            <person name="Stewart A."/>
            <person name="Sgouros J.G."/>
            <person name="Peat N."/>
            <person name="Hayles J."/>
            <person name="Baker S.G."/>
            <person name="Basham D."/>
            <person name="Bowman S."/>
            <person name="Brooks K."/>
            <person name="Brown D."/>
            <person name="Brown S."/>
            <person name="Chillingworth T."/>
            <person name="Churcher C.M."/>
            <person name="Collins M."/>
            <person name="Connor R."/>
            <person name="Cronin A."/>
            <person name="Davis P."/>
            <person name="Feltwell T."/>
            <person name="Fraser A."/>
            <person name="Gentles S."/>
            <person name="Goble A."/>
            <person name="Hamlin N."/>
            <person name="Harris D.E."/>
            <person name="Hidalgo J."/>
            <person name="Hodgson G."/>
            <person name="Holroyd S."/>
            <person name="Hornsby T."/>
            <person name="Howarth S."/>
            <person name="Huckle E.J."/>
            <person name="Hunt S."/>
            <person name="Jagels K."/>
            <person name="James K.D."/>
            <person name="Jones L."/>
            <person name="Jones M."/>
            <person name="Leather S."/>
            <person name="McDonald S."/>
            <person name="McLean J."/>
            <person name="Mooney P."/>
            <person name="Moule S."/>
            <person name="Mungall K.L."/>
            <person name="Murphy L.D."/>
            <person name="Niblett D."/>
            <person name="Odell C."/>
            <person name="Oliver K."/>
            <person name="O'Neil S."/>
            <person name="Pearson D."/>
            <person name="Quail M.A."/>
            <person name="Rabbinowitsch E."/>
            <person name="Rutherford K.M."/>
            <person name="Rutter S."/>
            <person name="Saunders D."/>
            <person name="Seeger K."/>
            <person name="Sharp S."/>
            <person name="Skelton J."/>
            <person name="Simmonds M.N."/>
            <person name="Squares R."/>
            <person name="Squares S."/>
            <person name="Stevens K."/>
            <person name="Taylor K."/>
            <person name="Taylor R.G."/>
            <person name="Tivey A."/>
            <person name="Walsh S.V."/>
            <person name="Warren T."/>
            <person name="Whitehead S."/>
            <person name="Woodward J.R."/>
            <person name="Volckaert G."/>
            <person name="Aert R."/>
            <person name="Robben J."/>
            <person name="Grymonprez B."/>
            <person name="Weltjens I."/>
            <person name="Vanstreels E."/>
            <person name="Rieger M."/>
            <person name="Schaefer M."/>
            <person name="Mueller-Auer S."/>
            <person name="Gabel C."/>
            <person name="Fuchs M."/>
            <person name="Duesterhoeft A."/>
            <person name="Fritzc C."/>
            <person name="Holzer E."/>
            <person name="Moestl D."/>
            <person name="Hilbert H."/>
            <person name="Borzym K."/>
            <person name="Langer I."/>
            <person name="Beck A."/>
            <person name="Lehrach H."/>
            <person name="Reinhardt R."/>
            <person name="Pohl T.M."/>
            <person name="Eger P."/>
            <person name="Zimmermann W."/>
            <person name="Wedler H."/>
            <person name="Wambutt R."/>
            <person name="Purnelle B."/>
            <person name="Goffeau A."/>
            <person name="Cadieu E."/>
            <person name="Dreano S."/>
            <person name="Gloux S."/>
            <person name="Lelaure V."/>
            <person name="Mottier S."/>
            <person name="Galibert F."/>
            <person name="Aves S.J."/>
            <person name="Xiang Z."/>
            <person name="Hunt C."/>
            <person name="Moore K."/>
            <person name="Hurst S.M."/>
            <person name="Lucas M."/>
            <person name="Rochet M."/>
            <person name="Gaillardin C."/>
            <person name="Tallada V.A."/>
            <person name="Garzon A."/>
            <person name="Thode G."/>
            <person name="Daga R.R."/>
            <person name="Cruzado L."/>
            <person name="Jimenez J."/>
            <person name="Sanchez M."/>
            <person name="del Rey F."/>
            <person name="Benito J."/>
            <person name="Dominguez A."/>
            <person name="Revuelta J.L."/>
            <person name="Moreno S."/>
            <person name="Armstrong J."/>
            <person name="Forsburg S.L."/>
            <person name="Cerutti L."/>
            <person name="Lowe T."/>
            <person name="McCombie W.R."/>
            <person name="Paulsen I."/>
            <person name="Potashkin J."/>
            <person name="Shpakovski G.V."/>
            <person name="Ussery D."/>
            <person name="Barrell B.G."/>
            <person name="Nurse P."/>
        </authorList>
    </citation>
    <scope>NUCLEOTIDE SEQUENCE [LARGE SCALE GENOMIC DNA]</scope>
    <source>
        <strain>972 / ATCC 24843</strain>
    </source>
</reference>
<reference key="2">
    <citation type="journal article" date="2006" name="Nat. Biotechnol.">
        <title>ORFeome cloning and global analysis of protein localization in the fission yeast Schizosaccharomyces pombe.</title>
        <authorList>
            <person name="Matsuyama A."/>
            <person name="Arai R."/>
            <person name="Yashiroda Y."/>
            <person name="Shirai A."/>
            <person name="Kamata A."/>
            <person name="Sekido S."/>
            <person name="Kobayashi Y."/>
            <person name="Hashimoto A."/>
            <person name="Hamamoto M."/>
            <person name="Hiraoka Y."/>
            <person name="Horinouchi S."/>
            <person name="Yoshida M."/>
        </authorList>
    </citation>
    <scope>SUBCELLULAR LOCATION [LARGE SCALE ANALYSIS]</scope>
</reference>
<organism>
    <name type="scientific">Schizosaccharomyces pombe (strain 972 / ATCC 24843)</name>
    <name type="common">Fission yeast</name>
    <dbReference type="NCBI Taxonomy" id="284812"/>
    <lineage>
        <taxon>Eukaryota</taxon>
        <taxon>Fungi</taxon>
        <taxon>Dikarya</taxon>
        <taxon>Ascomycota</taxon>
        <taxon>Taphrinomycotina</taxon>
        <taxon>Schizosaccharomycetes</taxon>
        <taxon>Schizosaccharomycetales</taxon>
        <taxon>Schizosaccharomycetaceae</taxon>
        <taxon>Schizosaccharomyces</taxon>
    </lineage>
</organism>
<proteinExistence type="predicted"/>
<accession>Q9P7Z8</accession>
<keyword id="KW-0963">Cytoplasm</keyword>
<keyword id="KW-0539">Nucleus</keyword>
<keyword id="KW-1185">Reference proteome</keyword>
<protein>
    <recommendedName>
        <fullName>Uncharacterized protein C26H8.13c</fullName>
    </recommendedName>
</protein>
<evidence type="ECO:0000269" key="1">
    <source>
    </source>
</evidence>
<name>YOUD_SCHPO</name>
<comment type="subcellular location">
    <subcellularLocation>
        <location evidence="1">Cytoplasm</location>
    </subcellularLocation>
    <subcellularLocation>
        <location evidence="1">Nucleus</location>
    </subcellularLocation>
</comment>
<gene>
    <name type="ORF">SPBC26H8.13c</name>
</gene>